<evidence type="ECO:0000250" key="1">
    <source>
        <dbReference type="UniProtKB" id="Q6P5F7"/>
    </source>
</evidence>
<evidence type="ECO:0000250" key="2">
    <source>
        <dbReference type="UniProtKB" id="Q9C0H2"/>
    </source>
</evidence>
<evidence type="ECO:0000255" key="3"/>
<evidence type="ECO:0000256" key="4">
    <source>
        <dbReference type="SAM" id="MobiDB-lite"/>
    </source>
</evidence>
<evidence type="ECO:0000305" key="5"/>
<organism>
    <name type="scientific">Danio rerio</name>
    <name type="common">Zebrafish</name>
    <name type="synonym">Brachydanio rerio</name>
    <dbReference type="NCBI Taxonomy" id="7955"/>
    <lineage>
        <taxon>Eukaryota</taxon>
        <taxon>Metazoa</taxon>
        <taxon>Chordata</taxon>
        <taxon>Craniata</taxon>
        <taxon>Vertebrata</taxon>
        <taxon>Euteleostomi</taxon>
        <taxon>Actinopterygii</taxon>
        <taxon>Neopterygii</taxon>
        <taxon>Teleostei</taxon>
        <taxon>Ostariophysi</taxon>
        <taxon>Cypriniformes</taxon>
        <taxon>Danionidae</taxon>
        <taxon>Danioninae</taxon>
        <taxon>Danio</taxon>
    </lineage>
</organism>
<keyword id="KW-0106">Calcium</keyword>
<keyword id="KW-1003">Cell membrane</keyword>
<keyword id="KW-0868">Chloride</keyword>
<keyword id="KW-0869">Chloride channel</keyword>
<keyword id="KW-1015">Disulfide bond</keyword>
<keyword id="KW-0325">Glycoprotein</keyword>
<keyword id="KW-0407">Ion channel</keyword>
<keyword id="KW-0406">Ion transport</keyword>
<keyword id="KW-0472">Membrane</keyword>
<keyword id="KW-0479">Metal-binding</keyword>
<keyword id="KW-1185">Reference proteome</keyword>
<keyword id="KW-0812">Transmembrane</keyword>
<keyword id="KW-1133">Transmembrane helix</keyword>
<keyword id="KW-0813">Transport</keyword>
<protein>
    <recommendedName>
        <fullName>Protein tweety homolog 3</fullName>
    </recommendedName>
    <alternativeName>
        <fullName evidence="1">Volume-regulated anion channel subunit ttyh3</fullName>
    </alternativeName>
</protein>
<gene>
    <name type="primary">ttyh3b</name>
    <name type="ORF">zgc:123242</name>
</gene>
<feature type="chain" id="PRO_0000312253" description="Protein tweety homolog 3">
    <location>
        <begin position="1"/>
        <end position="560"/>
    </location>
</feature>
<feature type="topological domain" description="Extracellular" evidence="2">
    <location>
        <begin position="1"/>
        <end position="43"/>
    </location>
</feature>
<feature type="transmembrane region" description="Helical; Name=1" evidence="3">
    <location>
        <begin position="44"/>
        <end position="64"/>
    </location>
</feature>
<feature type="topological domain" description="Cytoplasmic" evidence="2">
    <location>
        <begin position="65"/>
        <end position="87"/>
    </location>
</feature>
<feature type="transmembrane region" description="Helical; Name=2" evidence="3">
    <location>
        <begin position="88"/>
        <end position="108"/>
    </location>
</feature>
<feature type="topological domain" description="Extracellular" evidence="2">
    <location>
        <begin position="109"/>
        <end position="212"/>
    </location>
</feature>
<feature type="transmembrane region" description="Helical; Name=3" evidence="3">
    <location>
        <begin position="213"/>
        <end position="233"/>
    </location>
</feature>
<feature type="topological domain" description="Cytoplasmic" evidence="2">
    <location>
        <begin position="234"/>
        <end position="238"/>
    </location>
</feature>
<feature type="transmembrane region" description="Helical; Name=4" evidence="3">
    <location>
        <begin position="239"/>
        <end position="259"/>
    </location>
</feature>
<feature type="topological domain" description="Extracellular" evidence="2">
    <location>
        <begin position="260"/>
        <end position="387"/>
    </location>
</feature>
<feature type="transmembrane region" description="Helical; Name=5" evidence="3">
    <location>
        <begin position="388"/>
        <end position="408"/>
    </location>
</feature>
<feature type="topological domain" description="Cytoplasmic" evidence="2">
    <location>
        <begin position="409"/>
        <end position="560"/>
    </location>
</feature>
<feature type="region of interest" description="Disordered" evidence="4">
    <location>
        <begin position="415"/>
        <end position="435"/>
    </location>
</feature>
<feature type="region of interest" description="Disordered" evidence="4">
    <location>
        <begin position="486"/>
        <end position="560"/>
    </location>
</feature>
<feature type="compositionally biased region" description="Polar residues" evidence="4">
    <location>
        <begin position="539"/>
        <end position="549"/>
    </location>
</feature>
<feature type="binding site" evidence="1">
    <location>
        <position position="111"/>
    </location>
    <ligand>
        <name>Ca(2+)</name>
        <dbReference type="ChEBI" id="CHEBI:29108"/>
    </ligand>
</feature>
<feature type="binding site" evidence="1">
    <location>
        <position position="114"/>
    </location>
    <ligand>
        <name>Ca(2+)</name>
        <dbReference type="ChEBI" id="CHEBI:29108"/>
    </ligand>
</feature>
<feature type="glycosylation site" description="N-linked (GlcNAc...) asparagine" evidence="3">
    <location>
        <position position="127"/>
    </location>
</feature>
<feature type="glycosylation site" description="N-linked (GlcNAc...) asparagine" evidence="3">
    <location>
        <position position="145"/>
    </location>
</feature>
<feature type="glycosylation site" description="N-linked (GlcNAc...) asparagine" evidence="3">
    <location>
        <position position="352"/>
    </location>
</feature>
<feature type="disulfide bond" evidence="2">
    <location>
        <begin position="272"/>
        <end position="382"/>
    </location>
</feature>
<feature type="disulfide bond" evidence="2">
    <location>
        <begin position="300"/>
        <end position="367"/>
    </location>
</feature>
<sequence>MAAVVNYSPPWWVNLFHRLPHFNLQFQQTSSDFRPDDSDYQKAVLLLGAAALVCLALDLLFLLFYSFWLCCCRRKNHDSPNADCCCTAWCVIIATLVCSAGIAVGFYGNGETCDGVTRLTYSLRHANQTVAGIDKLVSESTSSLNETLMEGLVQLETVYSKQTDYLSIVQKLQGQLDELINLMLGVPFWSSNDLSLDHLASITEQYDWYRWLGYLGLLLFDVIICLLVLVGLIRNSRSILIGVCFLGVLTLVISWASLGLEFSFAVGASDFCVSPDSYITKVTRENAVINQDILQYYLKCSMGQTNPFQQKLSGSHKALVEMQDDVSELLRSAIRDFPKTKSNLEEMQGVLNSTEVSLHHLTALVDCRSLHMDYVQALTGLCYDGVEGLIYLVLFSFVTALMFSSIVCSVPHTWQSKRSEEEDGDETSATLGSRAPHDNLYRVHMPSLYSCGSSTYGNEASLPAAAHTVSNAPVTEYMSQNANFQTPRCENTPLIGRESPPPSYTSSMRAKYLATSRPDQPRPTESQNGLEPNMRPDLTSRSAPNSRPNSAIHRPHSAIH</sequence>
<comment type="function">
    <text evidence="1 2">May act as a calcium-independent, swelling-dependent volume-regulated anion channel (VRAC-swell) which plays a pivotal role in the process of regulatory volume decrease (RVD) in the brain through the efflux of anions like chloride and organic osmolytes like glutamate. Probable large-conductance Ca(2+)-activated chloride channel.</text>
</comment>
<comment type="catalytic activity">
    <reaction evidence="1">
        <text>chloride(in) = chloride(out)</text>
        <dbReference type="Rhea" id="RHEA:29823"/>
        <dbReference type="ChEBI" id="CHEBI:17996"/>
    </reaction>
</comment>
<comment type="catalytic activity">
    <reaction evidence="1">
        <text>L-glutamate(out) = L-glutamate(in)</text>
        <dbReference type="Rhea" id="RHEA:66336"/>
        <dbReference type="ChEBI" id="CHEBI:29985"/>
    </reaction>
    <physiologicalReaction direction="right-to-left" evidence="1">
        <dbReference type="Rhea" id="RHEA:66338"/>
    </physiologicalReaction>
</comment>
<comment type="subunit">
    <text evidence="1">Homotetramer; disulfide-linked. Forms cis-homodimers in the presence of Ca(2+).</text>
</comment>
<comment type="subcellular location">
    <subcellularLocation>
        <location evidence="1">Cell membrane</location>
        <topology evidence="3">Multi-pass membrane protein</topology>
    </subcellularLocation>
</comment>
<comment type="similarity">
    <text evidence="5">Belongs to the tweety family.</text>
</comment>
<reference key="1">
    <citation type="submission" date="2005-11" db="EMBL/GenBank/DDBJ databases">
        <authorList>
            <consortium name="NIH - Zebrafish Gene Collection (ZGC) project"/>
        </authorList>
    </citation>
    <scope>NUCLEOTIDE SEQUENCE [LARGE SCALE MRNA]</scope>
    <source>
        <tissue>Embryo</tissue>
    </source>
</reference>
<dbReference type="EMBL" id="BC109434">
    <property type="protein sequence ID" value="AAI09435.1"/>
    <property type="molecule type" value="mRNA"/>
</dbReference>
<dbReference type="RefSeq" id="NP_001032464.1">
    <property type="nucleotide sequence ID" value="NM_001037387.2"/>
</dbReference>
<dbReference type="SMR" id="Q32LT7"/>
<dbReference type="FunCoup" id="Q32LT7">
    <property type="interactions" value="2044"/>
</dbReference>
<dbReference type="STRING" id="7955.ENSDARP00000036553"/>
<dbReference type="GlyCosmos" id="Q32LT7">
    <property type="glycosylation" value="3 sites, No reported glycans"/>
</dbReference>
<dbReference type="PaxDb" id="7955-ENSDARP00000108518"/>
<dbReference type="GeneID" id="798421"/>
<dbReference type="KEGG" id="dre:798421"/>
<dbReference type="AGR" id="ZFIN:ZDB-GENE-051120-105"/>
<dbReference type="CTD" id="798421"/>
<dbReference type="ZFIN" id="ZDB-GENE-051120-105">
    <property type="gene designation" value="ttyh3b"/>
</dbReference>
<dbReference type="eggNOG" id="KOG4433">
    <property type="taxonomic scope" value="Eukaryota"/>
</dbReference>
<dbReference type="InParanoid" id="Q32LT7"/>
<dbReference type="OrthoDB" id="187568at2759"/>
<dbReference type="PhylomeDB" id="Q32LT7"/>
<dbReference type="Reactome" id="R-DRE-2672351">
    <property type="pathway name" value="Stimuli-sensing channels"/>
</dbReference>
<dbReference type="PRO" id="PR:Q32LT7"/>
<dbReference type="Proteomes" id="UP000000437">
    <property type="component" value="Chromosome 1"/>
</dbReference>
<dbReference type="GO" id="GO:0034707">
    <property type="term" value="C:chloride channel complex"/>
    <property type="evidence" value="ECO:0007669"/>
    <property type="project" value="UniProtKB-KW"/>
</dbReference>
<dbReference type="GO" id="GO:0005886">
    <property type="term" value="C:plasma membrane"/>
    <property type="evidence" value="ECO:0000250"/>
    <property type="project" value="UniProtKB"/>
</dbReference>
<dbReference type="GO" id="GO:0005509">
    <property type="term" value="F:calcium ion binding"/>
    <property type="evidence" value="ECO:0000250"/>
    <property type="project" value="UniProtKB"/>
</dbReference>
<dbReference type="GO" id="GO:0005229">
    <property type="term" value="F:intracellularly calcium-gated chloride channel activity"/>
    <property type="evidence" value="ECO:0000318"/>
    <property type="project" value="GO_Central"/>
</dbReference>
<dbReference type="GO" id="GO:0072320">
    <property type="term" value="F:volume-sensitive chloride channel activity"/>
    <property type="evidence" value="ECO:0000250"/>
    <property type="project" value="UniProtKB"/>
</dbReference>
<dbReference type="GO" id="GO:0015813">
    <property type="term" value="P:L-glutamate transmembrane transport"/>
    <property type="evidence" value="ECO:0000250"/>
    <property type="project" value="UniProtKB"/>
</dbReference>
<dbReference type="CDD" id="cd07912">
    <property type="entry name" value="Tweety_N"/>
    <property type="match status" value="1"/>
</dbReference>
<dbReference type="InterPro" id="IPR006990">
    <property type="entry name" value="Tweety"/>
</dbReference>
<dbReference type="PANTHER" id="PTHR12424:SF4">
    <property type="entry name" value="PROTEIN TWEETY HOMOLOG 3"/>
    <property type="match status" value="1"/>
</dbReference>
<dbReference type="PANTHER" id="PTHR12424">
    <property type="entry name" value="TWEETY-RELATED"/>
    <property type="match status" value="1"/>
</dbReference>
<dbReference type="Pfam" id="PF04906">
    <property type="entry name" value="Tweety"/>
    <property type="match status" value="1"/>
</dbReference>
<name>TTYH3_DANRE</name>
<accession>Q32LT7</accession>
<proteinExistence type="evidence at transcript level"/>